<keyword id="KW-0378">Hydrolase</keyword>
<keyword id="KW-0460">Magnesium</keyword>
<keyword id="KW-0479">Metal-binding</keyword>
<proteinExistence type="inferred from homology"/>
<comment type="function">
    <text evidence="1">Removes the phosphate from trehalose 6-phosphate to produce free trehalose.</text>
</comment>
<comment type="catalytic activity">
    <reaction>
        <text>alpha,alpha-trehalose 6-phosphate + H2O = alpha,alpha-trehalose + phosphate</text>
        <dbReference type="Rhea" id="RHEA:23420"/>
        <dbReference type="ChEBI" id="CHEBI:15377"/>
        <dbReference type="ChEBI" id="CHEBI:16551"/>
        <dbReference type="ChEBI" id="CHEBI:43474"/>
        <dbReference type="ChEBI" id="CHEBI:58429"/>
        <dbReference type="EC" id="3.1.3.12"/>
    </reaction>
</comment>
<comment type="cofactor">
    <cofactor evidence="1">
        <name>Mg(2+)</name>
        <dbReference type="ChEBI" id="CHEBI:18420"/>
    </cofactor>
</comment>
<comment type="pathway">
    <text>Glycan biosynthesis; trehalose biosynthesis.</text>
</comment>
<comment type="similarity">
    <text evidence="2">Belongs to the trehalose phosphatase family.</text>
</comment>
<protein>
    <recommendedName>
        <fullName>Trehalose-phosphate phosphatase</fullName>
        <shortName>TPP</shortName>
        <ecNumber>3.1.3.12</ecNumber>
    </recommendedName>
    <alternativeName>
        <fullName>Trehalose-6-phosphate phosphatase</fullName>
    </alternativeName>
</protein>
<gene>
    <name type="primary">otsB</name>
    <name type="ordered locus">MAV_4338</name>
</gene>
<feature type="chain" id="PRO_0000370700" description="Trehalose-phosphate phosphatase">
    <location>
        <begin position="1"/>
        <end position="391"/>
    </location>
</feature>
<feature type="active site" description="Nucleophile" evidence="1">
    <location>
        <position position="147"/>
    </location>
</feature>
<feature type="binding site" evidence="1">
    <location>
        <begin position="147"/>
        <end position="149"/>
    </location>
    <ligand>
        <name>substrate</name>
    </ligand>
</feature>
<feature type="binding site" evidence="1">
    <location>
        <position position="147"/>
    </location>
    <ligand>
        <name>Mg(2+)</name>
        <dbReference type="ChEBI" id="CHEBI:18420"/>
    </ligand>
</feature>
<feature type="binding site" evidence="1">
    <location>
        <position position="149"/>
    </location>
    <ligand>
        <name>Mg(2+)</name>
        <dbReference type="ChEBI" id="CHEBI:18420"/>
    </ligand>
</feature>
<feature type="binding site" evidence="1">
    <location>
        <position position="330"/>
    </location>
    <ligand>
        <name>Mg(2+)</name>
        <dbReference type="ChEBI" id="CHEBI:18420"/>
    </ligand>
</feature>
<accession>A0QKN5</accession>
<sequence>MGESGPVVIDPRRHDAVLFGVGDALGSALASQLGQIGVGTAAIAADDPAAAADRLRVRPGRCVVVAGDPAAVEAARAAGFALVIGLAPDGRDGDGLRAAGADAVIAELEQITVRTGDRRMSQLPDASQALTGGADGLAGRHPAVFFDFDGTLSDIVDDPDAARPVAGATAALTRLAARCPVAVLSGRDLADVTKRVGVPGIWYAGSHGFELTAPDGSHHQNDDAAAAIPVLAQAAGRLSDELGTIPGVVVEHKRFGVAVHYRNAARDRVGEVAAAVRAAGRHDALRVTTGREVIELRPDLDWDKGKTLHWVIEHLRRSGSGALTPVYLGDDITDEDAFDAVRGGPVQGVPILVRHNDDGDRATAALFALDSPARAAEFTERLADQLERGEG</sequence>
<name>OTSB_MYCA1</name>
<organism>
    <name type="scientific">Mycobacterium avium (strain 104)</name>
    <dbReference type="NCBI Taxonomy" id="243243"/>
    <lineage>
        <taxon>Bacteria</taxon>
        <taxon>Bacillati</taxon>
        <taxon>Actinomycetota</taxon>
        <taxon>Actinomycetes</taxon>
        <taxon>Mycobacteriales</taxon>
        <taxon>Mycobacteriaceae</taxon>
        <taxon>Mycobacterium</taxon>
        <taxon>Mycobacterium avium complex (MAC)</taxon>
    </lineage>
</organism>
<dbReference type="EC" id="3.1.3.12"/>
<dbReference type="EMBL" id="CP000479">
    <property type="protein sequence ID" value="ABK67241.1"/>
    <property type="molecule type" value="Genomic_DNA"/>
</dbReference>
<dbReference type="RefSeq" id="WP_011726010.1">
    <property type="nucleotide sequence ID" value="NC_008595.1"/>
</dbReference>
<dbReference type="SMR" id="A0QKN5"/>
<dbReference type="KEGG" id="mav:MAV_4338"/>
<dbReference type="HOGENOM" id="CLU_037265_4_1_11"/>
<dbReference type="UniPathway" id="UPA00299"/>
<dbReference type="Proteomes" id="UP000001574">
    <property type="component" value="Chromosome"/>
</dbReference>
<dbReference type="GO" id="GO:0046872">
    <property type="term" value="F:metal ion binding"/>
    <property type="evidence" value="ECO:0007669"/>
    <property type="project" value="UniProtKB-KW"/>
</dbReference>
<dbReference type="GO" id="GO:0004805">
    <property type="term" value="F:trehalose-phosphatase activity"/>
    <property type="evidence" value="ECO:0007669"/>
    <property type="project" value="UniProtKB-EC"/>
</dbReference>
<dbReference type="GO" id="GO:0005992">
    <property type="term" value="P:trehalose biosynthetic process"/>
    <property type="evidence" value="ECO:0007669"/>
    <property type="project" value="UniProtKB-UniPathway"/>
</dbReference>
<dbReference type="CDD" id="cd01627">
    <property type="entry name" value="HAD_TPP"/>
    <property type="match status" value="1"/>
</dbReference>
<dbReference type="FunFam" id="3.30.70.1020:FF:000007">
    <property type="entry name" value="Trehalose 6-phosphate phosphatase"/>
    <property type="match status" value="1"/>
</dbReference>
<dbReference type="Gene3D" id="3.40.50.1000">
    <property type="entry name" value="HAD superfamily/HAD-like"/>
    <property type="match status" value="2"/>
</dbReference>
<dbReference type="Gene3D" id="3.30.70.1020">
    <property type="entry name" value="Trehalose-6-phosphate phosphatase related protein, domain 2"/>
    <property type="match status" value="1"/>
</dbReference>
<dbReference type="InterPro" id="IPR036412">
    <property type="entry name" value="HAD-like_sf"/>
</dbReference>
<dbReference type="InterPro" id="IPR006379">
    <property type="entry name" value="HAD-SF_hydro_IIB"/>
</dbReference>
<dbReference type="InterPro" id="IPR023214">
    <property type="entry name" value="HAD_sf"/>
</dbReference>
<dbReference type="InterPro" id="IPR044651">
    <property type="entry name" value="OTSB-like"/>
</dbReference>
<dbReference type="InterPro" id="IPR003337">
    <property type="entry name" value="Trehalose_PPase"/>
</dbReference>
<dbReference type="NCBIfam" id="TIGR01484">
    <property type="entry name" value="HAD-SF-IIB"/>
    <property type="match status" value="1"/>
</dbReference>
<dbReference type="NCBIfam" id="TIGR00685">
    <property type="entry name" value="T6PP"/>
    <property type="match status" value="1"/>
</dbReference>
<dbReference type="PANTHER" id="PTHR43768">
    <property type="entry name" value="TREHALOSE 6-PHOSPHATE PHOSPHATASE"/>
    <property type="match status" value="1"/>
</dbReference>
<dbReference type="PANTHER" id="PTHR43768:SF3">
    <property type="entry name" value="TREHALOSE 6-PHOSPHATE PHOSPHATASE"/>
    <property type="match status" value="1"/>
</dbReference>
<dbReference type="Pfam" id="PF02358">
    <property type="entry name" value="Trehalose_PPase"/>
    <property type="match status" value="1"/>
</dbReference>
<dbReference type="SUPFAM" id="SSF56784">
    <property type="entry name" value="HAD-like"/>
    <property type="match status" value="2"/>
</dbReference>
<evidence type="ECO:0000250" key="1"/>
<evidence type="ECO:0000305" key="2"/>
<reference key="1">
    <citation type="submission" date="2006-10" db="EMBL/GenBank/DDBJ databases">
        <authorList>
            <person name="Fleischmann R.D."/>
            <person name="Dodson R.J."/>
            <person name="Haft D.H."/>
            <person name="Merkel J.S."/>
            <person name="Nelson W.C."/>
            <person name="Fraser C.M."/>
        </authorList>
    </citation>
    <scope>NUCLEOTIDE SEQUENCE [LARGE SCALE GENOMIC DNA]</scope>
    <source>
        <strain>104</strain>
    </source>
</reference>